<dbReference type="EC" id="3.4.21.-"/>
<dbReference type="EMBL" id="AE016826">
    <property type="protein sequence ID" value="AAO26989.1"/>
    <property type="molecule type" value="Genomic_DNA"/>
</dbReference>
<dbReference type="RefSeq" id="WP_011091390.1">
    <property type="nucleotide sequence ID" value="NC_004545.1"/>
</dbReference>
<dbReference type="SMR" id="Q89AL0"/>
<dbReference type="STRING" id="224915.bbp_263"/>
<dbReference type="KEGG" id="bab:bbp_263"/>
<dbReference type="eggNOG" id="COG0616">
    <property type="taxonomic scope" value="Bacteria"/>
</dbReference>
<dbReference type="HOGENOM" id="CLU_070316_0_0_6"/>
<dbReference type="OrthoDB" id="5614232at2"/>
<dbReference type="Proteomes" id="UP000000601">
    <property type="component" value="Chromosome"/>
</dbReference>
<dbReference type="GO" id="GO:0005886">
    <property type="term" value="C:plasma membrane"/>
    <property type="evidence" value="ECO:0007669"/>
    <property type="project" value="UniProtKB-SubCell"/>
</dbReference>
<dbReference type="GO" id="GO:0004252">
    <property type="term" value="F:serine-type endopeptidase activity"/>
    <property type="evidence" value="ECO:0007669"/>
    <property type="project" value="InterPro"/>
</dbReference>
<dbReference type="GO" id="GO:0006508">
    <property type="term" value="P:proteolysis"/>
    <property type="evidence" value="ECO:0007669"/>
    <property type="project" value="UniProtKB-KW"/>
</dbReference>
<dbReference type="CDD" id="cd07023">
    <property type="entry name" value="S49_Sppa_N_C"/>
    <property type="match status" value="1"/>
</dbReference>
<dbReference type="Gene3D" id="6.20.330.10">
    <property type="match status" value="1"/>
</dbReference>
<dbReference type="Gene3D" id="3.90.226.10">
    <property type="entry name" value="2-enoyl-CoA Hydratase, Chain A, domain 1"/>
    <property type="match status" value="1"/>
</dbReference>
<dbReference type="InterPro" id="IPR029045">
    <property type="entry name" value="ClpP/crotonase-like_dom_sf"/>
</dbReference>
<dbReference type="InterPro" id="IPR002142">
    <property type="entry name" value="Peptidase_S49"/>
</dbReference>
<dbReference type="InterPro" id="IPR013703">
    <property type="entry name" value="Peptidase_S49_N_proteobac"/>
</dbReference>
<dbReference type="InterPro" id="IPR047272">
    <property type="entry name" value="S49_SppA_C"/>
</dbReference>
<dbReference type="NCBIfam" id="NF008745">
    <property type="entry name" value="PRK11778.1"/>
    <property type="match status" value="1"/>
</dbReference>
<dbReference type="PANTHER" id="PTHR42987">
    <property type="entry name" value="PEPTIDASE S49"/>
    <property type="match status" value="1"/>
</dbReference>
<dbReference type="PANTHER" id="PTHR42987:SF4">
    <property type="entry name" value="PROTEASE SOHB-RELATED"/>
    <property type="match status" value="1"/>
</dbReference>
<dbReference type="Pfam" id="PF01343">
    <property type="entry name" value="Peptidase_S49"/>
    <property type="match status" value="1"/>
</dbReference>
<dbReference type="Pfam" id="PF08496">
    <property type="entry name" value="Peptidase_S49_N"/>
    <property type="match status" value="1"/>
</dbReference>
<dbReference type="SUPFAM" id="SSF52096">
    <property type="entry name" value="ClpP/crotonase"/>
    <property type="match status" value="1"/>
</dbReference>
<feature type="chain" id="PRO_0000171446" description="Putative protease SohB">
    <location>
        <begin position="1"/>
        <end position="349"/>
    </location>
</feature>
<feature type="transmembrane region" description="Helical" evidence="2">
    <location>
        <begin position="10"/>
        <end position="29"/>
    </location>
</feature>
<feature type="transmembrane region" description="Helical" evidence="2">
    <location>
        <begin position="188"/>
        <end position="210"/>
    </location>
</feature>
<feature type="active site" description="Nucleophile" evidence="1">
    <location>
        <position position="181"/>
    </location>
</feature>
<feature type="active site" description="Proton donor/acceptor" evidence="1">
    <location>
        <position position="233"/>
    </location>
</feature>
<sequence length="349" mass="40083">MHFIYDCSLFLFKIVIVIFFIIFVSSIILKISRKKNKNFGILSVSSLNDHYELVKNSIIVQLMDKKTKKLWNKKNKMLKRSTLLTNNNKLIDKDHNIIVVRAQPTLYVIDFKGGIAAHEVKSLREEISSIISVAQKHDEVLLRLESSGGTIHGYGLAAVQLQRLRSRKIFLTISIDKIATSGGYMMACVANYIIATPFSIIGSIGVVAQFPNIHKFLKKNNIDVELHTAGVHKRTLTIFGENTPEDRKKFVEELNVAHDLFKKFVKTMRPSLNIEKLSNGECWFGSIALKKKLVDDINTSDDFIISRIRKFNILHVKFKYNESIIKALFYKKLKTINNLIYKYLNNKLF</sequence>
<name>SOHB_BUCBP</name>
<proteinExistence type="inferred from homology"/>
<organism>
    <name type="scientific">Buchnera aphidicola subsp. Baizongia pistaciae (strain Bp)</name>
    <dbReference type="NCBI Taxonomy" id="224915"/>
    <lineage>
        <taxon>Bacteria</taxon>
        <taxon>Pseudomonadati</taxon>
        <taxon>Pseudomonadota</taxon>
        <taxon>Gammaproteobacteria</taxon>
        <taxon>Enterobacterales</taxon>
        <taxon>Erwiniaceae</taxon>
        <taxon>Buchnera</taxon>
    </lineage>
</organism>
<gene>
    <name type="primary">sohB</name>
    <name type="ordered locus">bbp_263</name>
</gene>
<comment type="function">
    <text evidence="1">Possible protease.</text>
</comment>
<comment type="subcellular location">
    <subcellularLocation>
        <location evidence="3">Cell membrane</location>
        <topology evidence="3">Multi-pass membrane protein</topology>
    </subcellularLocation>
</comment>
<comment type="similarity">
    <text evidence="3">Belongs to the peptidase S49 family.</text>
</comment>
<accession>Q89AL0</accession>
<keyword id="KW-1003">Cell membrane</keyword>
<keyword id="KW-0378">Hydrolase</keyword>
<keyword id="KW-0472">Membrane</keyword>
<keyword id="KW-0645">Protease</keyword>
<keyword id="KW-1185">Reference proteome</keyword>
<keyword id="KW-0720">Serine protease</keyword>
<keyword id="KW-0812">Transmembrane</keyword>
<keyword id="KW-1133">Transmembrane helix</keyword>
<protein>
    <recommendedName>
        <fullName>Putative protease SohB</fullName>
        <ecNumber>3.4.21.-</ecNumber>
    </recommendedName>
</protein>
<reference key="1">
    <citation type="journal article" date="2003" name="Proc. Natl. Acad. Sci. U.S.A.">
        <title>Reductive genome evolution in Buchnera aphidicola.</title>
        <authorList>
            <person name="van Ham R.C.H.J."/>
            <person name="Kamerbeek J."/>
            <person name="Palacios C."/>
            <person name="Rausell C."/>
            <person name="Abascal F."/>
            <person name="Bastolla U."/>
            <person name="Fernandez J.M."/>
            <person name="Jimenez L."/>
            <person name="Postigo M."/>
            <person name="Silva F.J."/>
            <person name="Tamames J."/>
            <person name="Viguera E."/>
            <person name="Latorre A."/>
            <person name="Valencia A."/>
            <person name="Moran F."/>
            <person name="Moya A."/>
        </authorList>
    </citation>
    <scope>NUCLEOTIDE SEQUENCE [LARGE SCALE GENOMIC DNA]</scope>
    <source>
        <strain>Bp</strain>
    </source>
</reference>
<evidence type="ECO:0000250" key="1"/>
<evidence type="ECO:0000255" key="2"/>
<evidence type="ECO:0000305" key="3"/>